<sequence>MAKLHDYYKSSVVAELTKQFSYTSVMQVPRIEKITLNMGVGEAINDKKLLENAAADMATISGQKPLITKARKSVAGFKIREGYPIGCKVTLRGERMWEFLERLISIALPRVRDFRGVSAKSFDGRGNYSMGVREQIIFPEIDFDKVDRVRGLDITITTSAGTDEEGRALLAAFNFPFRK</sequence>
<accession>A7N0I9</accession>
<reference key="1">
    <citation type="submission" date="2007-08" db="EMBL/GenBank/DDBJ databases">
        <authorList>
            <consortium name="The Vibrio harveyi Genome Sequencing Project"/>
            <person name="Bassler B."/>
            <person name="Clifton S.W."/>
            <person name="Fulton L."/>
            <person name="Delehaunty K."/>
            <person name="Fronick C."/>
            <person name="Harrison M."/>
            <person name="Markivic C."/>
            <person name="Fulton R."/>
            <person name="Tin-Wollam A.-M."/>
            <person name="Shah N."/>
            <person name="Pepin K."/>
            <person name="Nash W."/>
            <person name="Thiruvilangam P."/>
            <person name="Bhonagiri V."/>
            <person name="Waters C."/>
            <person name="Tu K.C."/>
            <person name="Irgon J."/>
            <person name="Wilson R.K."/>
        </authorList>
    </citation>
    <scope>NUCLEOTIDE SEQUENCE [LARGE SCALE GENOMIC DNA]</scope>
    <source>
        <strain>ATCC BAA-1116 / BB120</strain>
    </source>
</reference>
<gene>
    <name evidence="1" type="primary">rplE</name>
    <name type="ordered locus">VIBHAR_00742</name>
</gene>
<keyword id="KW-0687">Ribonucleoprotein</keyword>
<keyword id="KW-0689">Ribosomal protein</keyword>
<keyword id="KW-0694">RNA-binding</keyword>
<keyword id="KW-0699">rRNA-binding</keyword>
<keyword id="KW-0820">tRNA-binding</keyword>
<dbReference type="EMBL" id="CP000789">
    <property type="protein sequence ID" value="ABU69743.1"/>
    <property type="molecule type" value="Genomic_DNA"/>
</dbReference>
<dbReference type="RefSeq" id="WP_005528536.1">
    <property type="nucleotide sequence ID" value="NC_022269.1"/>
</dbReference>
<dbReference type="SMR" id="A7N0I9"/>
<dbReference type="GeneID" id="67378616"/>
<dbReference type="KEGG" id="vha:VIBHAR_00742"/>
<dbReference type="PATRIC" id="fig|338187.25.peg.1872"/>
<dbReference type="Proteomes" id="UP000008152">
    <property type="component" value="Chromosome I"/>
</dbReference>
<dbReference type="GO" id="GO:1990904">
    <property type="term" value="C:ribonucleoprotein complex"/>
    <property type="evidence" value="ECO:0007669"/>
    <property type="project" value="UniProtKB-KW"/>
</dbReference>
<dbReference type="GO" id="GO:0005840">
    <property type="term" value="C:ribosome"/>
    <property type="evidence" value="ECO:0007669"/>
    <property type="project" value="UniProtKB-KW"/>
</dbReference>
<dbReference type="GO" id="GO:0019843">
    <property type="term" value="F:rRNA binding"/>
    <property type="evidence" value="ECO:0007669"/>
    <property type="project" value="UniProtKB-UniRule"/>
</dbReference>
<dbReference type="GO" id="GO:0003735">
    <property type="term" value="F:structural constituent of ribosome"/>
    <property type="evidence" value="ECO:0007669"/>
    <property type="project" value="InterPro"/>
</dbReference>
<dbReference type="GO" id="GO:0000049">
    <property type="term" value="F:tRNA binding"/>
    <property type="evidence" value="ECO:0007669"/>
    <property type="project" value="UniProtKB-UniRule"/>
</dbReference>
<dbReference type="GO" id="GO:0006412">
    <property type="term" value="P:translation"/>
    <property type="evidence" value="ECO:0007669"/>
    <property type="project" value="UniProtKB-UniRule"/>
</dbReference>
<dbReference type="FunFam" id="3.30.1440.10:FF:000001">
    <property type="entry name" value="50S ribosomal protein L5"/>
    <property type="match status" value="1"/>
</dbReference>
<dbReference type="Gene3D" id="3.30.1440.10">
    <property type="match status" value="1"/>
</dbReference>
<dbReference type="HAMAP" id="MF_01333_B">
    <property type="entry name" value="Ribosomal_uL5_B"/>
    <property type="match status" value="1"/>
</dbReference>
<dbReference type="InterPro" id="IPR002132">
    <property type="entry name" value="Ribosomal_uL5"/>
</dbReference>
<dbReference type="InterPro" id="IPR020930">
    <property type="entry name" value="Ribosomal_uL5_bac-type"/>
</dbReference>
<dbReference type="InterPro" id="IPR031309">
    <property type="entry name" value="Ribosomal_uL5_C"/>
</dbReference>
<dbReference type="InterPro" id="IPR020929">
    <property type="entry name" value="Ribosomal_uL5_CS"/>
</dbReference>
<dbReference type="InterPro" id="IPR022803">
    <property type="entry name" value="Ribosomal_uL5_dom_sf"/>
</dbReference>
<dbReference type="InterPro" id="IPR031310">
    <property type="entry name" value="Ribosomal_uL5_N"/>
</dbReference>
<dbReference type="NCBIfam" id="NF000585">
    <property type="entry name" value="PRK00010.1"/>
    <property type="match status" value="1"/>
</dbReference>
<dbReference type="PANTHER" id="PTHR11994">
    <property type="entry name" value="60S RIBOSOMAL PROTEIN L11-RELATED"/>
    <property type="match status" value="1"/>
</dbReference>
<dbReference type="Pfam" id="PF00281">
    <property type="entry name" value="Ribosomal_L5"/>
    <property type="match status" value="1"/>
</dbReference>
<dbReference type="Pfam" id="PF00673">
    <property type="entry name" value="Ribosomal_L5_C"/>
    <property type="match status" value="1"/>
</dbReference>
<dbReference type="PIRSF" id="PIRSF002161">
    <property type="entry name" value="Ribosomal_L5"/>
    <property type="match status" value="1"/>
</dbReference>
<dbReference type="SUPFAM" id="SSF55282">
    <property type="entry name" value="RL5-like"/>
    <property type="match status" value="1"/>
</dbReference>
<dbReference type="PROSITE" id="PS00358">
    <property type="entry name" value="RIBOSOMAL_L5"/>
    <property type="match status" value="1"/>
</dbReference>
<feature type="chain" id="PRO_1000052855" description="Large ribosomal subunit protein uL5">
    <location>
        <begin position="1"/>
        <end position="179"/>
    </location>
</feature>
<organism>
    <name type="scientific">Vibrio campbellii (strain ATCC BAA-1116)</name>
    <dbReference type="NCBI Taxonomy" id="2902295"/>
    <lineage>
        <taxon>Bacteria</taxon>
        <taxon>Pseudomonadati</taxon>
        <taxon>Pseudomonadota</taxon>
        <taxon>Gammaproteobacteria</taxon>
        <taxon>Vibrionales</taxon>
        <taxon>Vibrionaceae</taxon>
        <taxon>Vibrio</taxon>
    </lineage>
</organism>
<protein>
    <recommendedName>
        <fullName evidence="1">Large ribosomal subunit protein uL5</fullName>
    </recommendedName>
    <alternativeName>
        <fullName evidence="2">50S ribosomal protein L5</fullName>
    </alternativeName>
</protein>
<proteinExistence type="inferred from homology"/>
<evidence type="ECO:0000255" key="1">
    <source>
        <dbReference type="HAMAP-Rule" id="MF_01333"/>
    </source>
</evidence>
<evidence type="ECO:0000305" key="2"/>
<comment type="function">
    <text evidence="1">This is one of the proteins that bind and probably mediate the attachment of the 5S RNA into the large ribosomal subunit, where it forms part of the central protuberance. In the 70S ribosome it contacts protein S13 of the 30S subunit (bridge B1b), connecting the 2 subunits; this bridge is implicated in subunit movement. Contacts the P site tRNA; the 5S rRNA and some of its associated proteins might help stabilize positioning of ribosome-bound tRNAs.</text>
</comment>
<comment type="subunit">
    <text evidence="1">Part of the 50S ribosomal subunit; part of the 5S rRNA/L5/L18/L25 subcomplex. Contacts the 5S rRNA and the P site tRNA. Forms a bridge to the 30S subunit in the 70S ribosome.</text>
</comment>
<comment type="similarity">
    <text evidence="1">Belongs to the universal ribosomal protein uL5 family.</text>
</comment>
<name>RL5_VIBC1</name>